<gene>
    <name type="primary">PLA2G4A</name>
    <name type="synonym">CPLA2</name>
    <name type="synonym">PLA2G4</name>
</gene>
<evidence type="ECO:0000250" key="1"/>
<evidence type="ECO:0000250" key="2">
    <source>
        <dbReference type="UniProtKB" id="P47712"/>
    </source>
</evidence>
<evidence type="ECO:0000250" key="3">
    <source>
        <dbReference type="UniProtKB" id="P47713"/>
    </source>
</evidence>
<evidence type="ECO:0000250" key="4">
    <source>
        <dbReference type="UniProtKB" id="P50393"/>
    </source>
</evidence>
<evidence type="ECO:0000255" key="5">
    <source>
        <dbReference type="PROSITE-ProRule" id="PRU00041"/>
    </source>
</evidence>
<evidence type="ECO:0000255" key="6">
    <source>
        <dbReference type="PROSITE-ProRule" id="PRU00555"/>
    </source>
</evidence>
<evidence type="ECO:0000256" key="7">
    <source>
        <dbReference type="SAM" id="MobiDB-lite"/>
    </source>
</evidence>
<reference key="1">
    <citation type="submission" date="2004-11" db="EMBL/GenBank/DDBJ databases">
        <authorList>
            <consortium name="The German cDNA consortium"/>
        </authorList>
    </citation>
    <scope>NUCLEOTIDE SEQUENCE [LARGE SCALE MRNA]</scope>
    <source>
        <tissue>Kidney</tissue>
    </source>
</reference>
<feature type="chain" id="PRO_0000345134" description="Cytosolic phospholipase A2">
    <location>
        <begin position="1"/>
        <end position="749"/>
    </location>
</feature>
<feature type="domain" description="C2" evidence="5">
    <location>
        <begin position="6"/>
        <end position="122"/>
    </location>
</feature>
<feature type="domain" description="PLA2c" evidence="6">
    <location>
        <begin position="140"/>
        <end position="740"/>
    </location>
</feature>
<feature type="region of interest" description="Phospholipid binding" evidence="1">
    <location>
        <begin position="1"/>
        <end position="178"/>
    </location>
</feature>
<feature type="region of interest" description="Disordered" evidence="7">
    <location>
        <begin position="409"/>
        <end position="457"/>
    </location>
</feature>
<feature type="active site" description="Nucleophile" evidence="1">
    <location>
        <position position="228"/>
    </location>
</feature>
<feature type="active site" description="Proton acceptor" evidence="1">
    <location>
        <position position="549"/>
    </location>
</feature>
<feature type="binding site" evidence="1">
    <location>
        <position position="40"/>
    </location>
    <ligand>
        <name>Ca(2+)</name>
        <dbReference type="ChEBI" id="CHEBI:29108"/>
        <label>1</label>
    </ligand>
</feature>
<feature type="binding site" evidence="1">
    <location>
        <position position="40"/>
    </location>
    <ligand>
        <name>Ca(2+)</name>
        <dbReference type="ChEBI" id="CHEBI:29108"/>
        <label>2</label>
    </ligand>
</feature>
<feature type="binding site" evidence="1">
    <location>
        <position position="41"/>
    </location>
    <ligand>
        <name>Ca(2+)</name>
        <dbReference type="ChEBI" id="CHEBI:29108"/>
        <label>1</label>
    </ligand>
</feature>
<feature type="binding site" evidence="1">
    <location>
        <position position="43"/>
    </location>
    <ligand>
        <name>Ca(2+)</name>
        <dbReference type="ChEBI" id="CHEBI:29108"/>
        <label>1</label>
    </ligand>
</feature>
<feature type="binding site" evidence="1">
    <location>
        <position position="43"/>
    </location>
    <ligand>
        <name>Ca(2+)</name>
        <dbReference type="ChEBI" id="CHEBI:29108"/>
        <label>2</label>
    </ligand>
</feature>
<feature type="binding site" evidence="1">
    <location>
        <position position="65"/>
    </location>
    <ligand>
        <name>Ca(2+)</name>
        <dbReference type="ChEBI" id="CHEBI:29108"/>
        <label>1</label>
    </ligand>
</feature>
<feature type="binding site" evidence="1">
    <location>
        <position position="93"/>
    </location>
    <ligand>
        <name>Ca(2+)</name>
        <dbReference type="ChEBI" id="CHEBI:29108"/>
        <label>2</label>
    </ligand>
</feature>
<feature type="binding site" evidence="1">
    <location>
        <position position="94"/>
    </location>
    <ligand>
        <name>Ca(2+)</name>
        <dbReference type="ChEBI" id="CHEBI:29108"/>
        <label>2</label>
    </ligand>
</feature>
<feature type="binding site" evidence="1">
    <location>
        <position position="95"/>
    </location>
    <ligand>
        <name>Ca(2+)</name>
        <dbReference type="ChEBI" id="CHEBI:29108"/>
        <label>2</label>
    </ligand>
</feature>
<feature type="modified residue" description="Phosphoserine" evidence="2">
    <location>
        <position position="2"/>
    </location>
</feature>
<feature type="modified residue" description="Phosphothreonine" evidence="2">
    <location>
        <position position="268"/>
    </location>
</feature>
<feature type="modified residue" description="Phosphoserine" evidence="4">
    <location>
        <position position="434"/>
    </location>
</feature>
<feature type="modified residue" description="Phosphoserine" evidence="2">
    <location>
        <position position="435"/>
    </location>
</feature>
<feature type="modified residue" description="Phosphoserine" evidence="2">
    <location>
        <position position="437"/>
    </location>
</feature>
<feature type="modified residue" description="Phosphoserine; by MAPK" evidence="2">
    <location>
        <position position="505"/>
    </location>
</feature>
<feature type="modified residue" description="Phosphoserine" evidence="4">
    <location>
        <position position="515"/>
    </location>
</feature>
<feature type="modified residue" description="Phosphoserine" evidence="2">
    <location>
        <position position="727"/>
    </location>
</feature>
<feature type="modified residue" description="Phosphoserine" evidence="2">
    <location>
        <position position="729"/>
    </location>
</feature>
<feature type="cross-link" description="Glycyl lysine isopeptide (Lys-Gly) (interchain with G-Cter in SUMO2)" evidence="2">
    <location>
        <position position="541"/>
    </location>
</feature>
<feature type="cross-link" description="Glycyl lysine isopeptide (Lys-Gly) (interchain with G-Cter in SUMO2)" evidence="2">
    <location>
        <position position="606"/>
    </location>
</feature>
<comment type="function">
    <text evidence="2 3">Has primarily calcium-dependent phospholipase and lysophospholipase activities, with a major role in membrane lipid remodeling and biosynthesis of lipid mediators of the inflammatory response (By similarity). Plays an important role in embryo implantation and parturition through its ability to trigger prostanoid production (By similarity). Preferentially hydrolyzes the ester bond of the fatty acyl group attached at sn-2 position of phospholipids (phospholipase A2 activity). Selectively hydrolyzes sn-2 arachidonoyl group from membrane phospholipids, providing the precursor for eicosanoid biosynthesis via the cyclooxygenase pathway. In an alternative pathway of eicosanoid biosynthesis, hydrolyzes sn-2 fatty acyl chain of eicosanoid lysophopholipids to release free bioactive eicosanoids. Hydrolyzes the ester bond of the fatty acyl group attached at sn-1 position of phospholipids (phospholipase A1 activity) only if an ether linkage rather than an ester linkage is present at the sn-2 position. This hydrolysis is not stereospecific. Has calcium-independent phospholipase A2 and lysophospholipase activities in the presence of phosphoinositides. Has O-acyltransferase activity. Catalyzes the transfer of fatty acyl chains from phospholipids to a primary hydroxyl group of glycerol (sn-1 or sn-3), potentially contributing to monoacylglycerol synthesis (By similarity).</text>
</comment>
<comment type="catalytic activity">
    <reaction evidence="2">
        <text>a 1,2-diacyl-sn-glycero-3-phosphocholine + H2O = a 1-acyl-sn-glycero-3-phosphocholine + a fatty acid + H(+)</text>
        <dbReference type="Rhea" id="RHEA:15801"/>
        <dbReference type="ChEBI" id="CHEBI:15377"/>
        <dbReference type="ChEBI" id="CHEBI:15378"/>
        <dbReference type="ChEBI" id="CHEBI:28868"/>
        <dbReference type="ChEBI" id="CHEBI:57643"/>
        <dbReference type="ChEBI" id="CHEBI:58168"/>
        <dbReference type="EC" id="3.1.1.4"/>
    </reaction>
    <physiologicalReaction direction="left-to-right" evidence="2">
        <dbReference type="Rhea" id="RHEA:15802"/>
    </physiologicalReaction>
</comment>
<comment type="catalytic activity">
    <reaction evidence="2">
        <text>a 1-O-alkyl-2-acyl-sn-glycero-3-phosphocholine + H2O = a 1-O-alkyl-sn-glycero-3-phosphocholine + a fatty acid + H(+)</text>
        <dbReference type="Rhea" id="RHEA:36231"/>
        <dbReference type="ChEBI" id="CHEBI:15377"/>
        <dbReference type="ChEBI" id="CHEBI:15378"/>
        <dbReference type="ChEBI" id="CHEBI:28868"/>
        <dbReference type="ChEBI" id="CHEBI:30909"/>
        <dbReference type="ChEBI" id="CHEBI:36702"/>
        <dbReference type="EC" id="3.1.1.4"/>
    </reaction>
    <physiologicalReaction direction="left-to-right" evidence="2">
        <dbReference type="Rhea" id="RHEA:36232"/>
    </physiologicalReaction>
</comment>
<comment type="catalytic activity">
    <reaction evidence="2">
        <text>a 1-acyl-sn-glycero-3-phosphocholine + H2O = sn-glycerol 3-phosphocholine + a fatty acid + H(+)</text>
        <dbReference type="Rhea" id="RHEA:15177"/>
        <dbReference type="ChEBI" id="CHEBI:15377"/>
        <dbReference type="ChEBI" id="CHEBI:15378"/>
        <dbReference type="ChEBI" id="CHEBI:16870"/>
        <dbReference type="ChEBI" id="CHEBI:28868"/>
        <dbReference type="ChEBI" id="CHEBI:58168"/>
        <dbReference type="EC" id="3.1.1.5"/>
    </reaction>
    <physiologicalReaction direction="left-to-right" evidence="2">
        <dbReference type="Rhea" id="RHEA:15178"/>
    </physiologicalReaction>
</comment>
<comment type="catalytic activity">
    <reaction evidence="2">
        <text>1-hexadecanoyl-2-(5Z,8Z,11Z,14Z-eicosatetraenoyl)-sn-glycero-3-phosphocholine + H2O = 1-hexadecanoyl-sn-glycero-3-phosphocholine + (5Z,8Z,11Z,14Z)-eicosatetraenoate + H(+)</text>
        <dbReference type="Rhea" id="RHEA:40427"/>
        <dbReference type="ChEBI" id="CHEBI:15377"/>
        <dbReference type="ChEBI" id="CHEBI:15378"/>
        <dbReference type="ChEBI" id="CHEBI:32395"/>
        <dbReference type="ChEBI" id="CHEBI:72998"/>
        <dbReference type="ChEBI" id="CHEBI:73003"/>
    </reaction>
    <physiologicalReaction direction="left-to-right" evidence="2">
        <dbReference type="Rhea" id="RHEA:40428"/>
    </physiologicalReaction>
</comment>
<comment type="catalytic activity">
    <reaction evidence="2">
        <text>1,2-di-(5Z,8Z,11Z,14Z-eicosatetraenoyl)-sn-glycero-3-phosphocholine + H2O = 1-(5Z,8Z,11Z,14Z-eicosatetraenoyl)-sn-glycero-3-phosphocholine + (5Z,8Z,11Z,14Z)-eicosatetraenoate + H(+)</text>
        <dbReference type="Rhea" id="RHEA:41075"/>
        <dbReference type="ChEBI" id="CHEBI:15377"/>
        <dbReference type="ChEBI" id="CHEBI:15378"/>
        <dbReference type="ChEBI" id="CHEBI:32395"/>
        <dbReference type="ChEBI" id="CHEBI:60657"/>
        <dbReference type="ChEBI" id="CHEBI:74344"/>
    </reaction>
    <physiologicalReaction direction="left-to-right" evidence="2">
        <dbReference type="Rhea" id="RHEA:41076"/>
    </physiologicalReaction>
</comment>
<comment type="catalytic activity">
    <reaction evidence="2">
        <text>1-octadecanoyl-2-(5Z,8Z,11Z,14Z-eicosatetraenoyl)-sn-glycero-3-phosphocholine + H2O = 1-octadecanoyl-sn-glycero-3-phosphocholine + (5Z,8Z,11Z,14Z)-eicosatetraenoate + H(+)</text>
        <dbReference type="Rhea" id="RHEA:40519"/>
        <dbReference type="ChEBI" id="CHEBI:15377"/>
        <dbReference type="ChEBI" id="CHEBI:15378"/>
        <dbReference type="ChEBI" id="CHEBI:32395"/>
        <dbReference type="ChEBI" id="CHEBI:73858"/>
        <dbReference type="ChEBI" id="CHEBI:74965"/>
    </reaction>
    <physiologicalReaction direction="left-to-right" evidence="2">
        <dbReference type="Rhea" id="RHEA:40520"/>
    </physiologicalReaction>
</comment>
<comment type="catalytic activity">
    <reaction evidence="2">
        <text>1-hexadecanoyl-2-(9Z,12Z-octadecadienoyl)-sn-glycero-3-phosphocholine + H2O = (9Z,12Z)-octadecadienoate + 1-hexadecanoyl-sn-glycero-3-phosphocholine + H(+)</text>
        <dbReference type="Rhea" id="RHEA:40811"/>
        <dbReference type="ChEBI" id="CHEBI:15377"/>
        <dbReference type="ChEBI" id="CHEBI:15378"/>
        <dbReference type="ChEBI" id="CHEBI:30245"/>
        <dbReference type="ChEBI" id="CHEBI:72998"/>
        <dbReference type="ChEBI" id="CHEBI:73002"/>
    </reaction>
    <physiologicalReaction direction="left-to-right" evidence="2">
        <dbReference type="Rhea" id="RHEA:40812"/>
    </physiologicalReaction>
</comment>
<comment type="catalytic activity">
    <reaction evidence="2">
        <text>1-octadecanoyl-2-(9Z,12Z,15Z-octadecatrienoyl)-sn-glycero-3-phosphocholine + H2O = (9Z,12Z,15Z)-octadecatrienoate + 1-octadecanoyl-sn-glycero-3-phosphocholine + H(+)</text>
        <dbReference type="Rhea" id="RHEA:41307"/>
        <dbReference type="ChEBI" id="CHEBI:15377"/>
        <dbReference type="ChEBI" id="CHEBI:15378"/>
        <dbReference type="ChEBI" id="CHEBI:32387"/>
        <dbReference type="ChEBI" id="CHEBI:73858"/>
        <dbReference type="ChEBI" id="CHEBI:78022"/>
    </reaction>
    <physiologicalReaction direction="left-to-right" evidence="2">
        <dbReference type="Rhea" id="RHEA:41308"/>
    </physiologicalReaction>
</comment>
<comment type="catalytic activity">
    <reaction evidence="2">
        <text>1-(5Z,8Z,11Z,14Z-eicosatetraenoyl)-2-hexadecanoyl-sn-glycero-3-phosphocholine + H2O = 1-(5Z,8Z,11Z,14Z-eicosatetraenoyl)-sn-glycero-3-phosphocholine + hexadecanoate + H(+)</text>
        <dbReference type="Rhea" id="RHEA:41071"/>
        <dbReference type="ChEBI" id="CHEBI:7896"/>
        <dbReference type="ChEBI" id="CHEBI:15377"/>
        <dbReference type="ChEBI" id="CHEBI:15378"/>
        <dbReference type="ChEBI" id="CHEBI:74344"/>
        <dbReference type="ChEBI" id="CHEBI:77694"/>
    </reaction>
    <physiologicalReaction direction="left-to-right" evidence="2">
        <dbReference type="Rhea" id="RHEA:41072"/>
    </physiologicalReaction>
</comment>
<comment type="catalytic activity">
    <reaction evidence="2">
        <text>1-O-hexadecyl-2-(5Z,8Z,11Z,14Z)-eicosatetraenoyl-sn-glycero-3-phosphocholine + H2O = 1-O-hexadecyl-sn-glycero-3-phosphocholine + (5Z,8Z,11Z,14Z)-eicosatetraenoate + H(+)</text>
        <dbReference type="Rhea" id="RHEA:41067"/>
        <dbReference type="ChEBI" id="CHEBI:15377"/>
        <dbReference type="ChEBI" id="CHEBI:15378"/>
        <dbReference type="ChEBI" id="CHEBI:32395"/>
        <dbReference type="ChEBI" id="CHEBI:55430"/>
        <dbReference type="ChEBI" id="CHEBI:64496"/>
    </reaction>
    <physiologicalReaction direction="left-to-right" evidence="2">
        <dbReference type="Rhea" id="RHEA:41068"/>
    </physiologicalReaction>
</comment>
<comment type="catalytic activity">
    <reaction evidence="2">
        <text>1,2-di-(9Z-octadecenoyl)-sn-glycero-3-phospho-(1'-sn-glycerol) + H2O = 1-(9Z-octadecenoyl)-sn-glycero-3-phospho-(1'-sn-glycerol) + (9Z)-octadecenoate + H(+)</text>
        <dbReference type="Rhea" id="RHEA:41123"/>
        <dbReference type="ChEBI" id="CHEBI:15377"/>
        <dbReference type="ChEBI" id="CHEBI:15378"/>
        <dbReference type="ChEBI" id="CHEBI:30823"/>
        <dbReference type="ChEBI" id="CHEBI:72828"/>
        <dbReference type="ChEBI" id="CHEBI:75163"/>
    </reaction>
    <physiologicalReaction direction="left-to-right" evidence="2">
        <dbReference type="Rhea" id="RHEA:41124"/>
    </physiologicalReaction>
</comment>
<comment type="catalytic activity">
    <reaction evidence="2">
        <text>1-octadecanoyl-2-(5Z,8Z,11Z,14Z-eicosatetraenoyl)-sn-glycero-3-phosphate + H2O = 1-octadecanoyl-sn-glycero-3-phosphate + (5Z,8Z,11Z,14Z)-eicosatetraenoate + H(+)</text>
        <dbReference type="Rhea" id="RHEA:40451"/>
        <dbReference type="ChEBI" id="CHEBI:15377"/>
        <dbReference type="ChEBI" id="CHEBI:15378"/>
        <dbReference type="ChEBI" id="CHEBI:32395"/>
        <dbReference type="ChEBI" id="CHEBI:74565"/>
        <dbReference type="ChEBI" id="CHEBI:77091"/>
    </reaction>
    <physiologicalReaction direction="left-to-right" evidence="2">
        <dbReference type="Rhea" id="RHEA:40452"/>
    </physiologicalReaction>
</comment>
<comment type="catalytic activity">
    <reaction evidence="2">
        <text>1-hexadecanoyl-sn-glycero-3-phosphocholine + H2O = sn-glycerol 3-phosphocholine + hexadecanoate + H(+)</text>
        <dbReference type="Rhea" id="RHEA:40435"/>
        <dbReference type="ChEBI" id="CHEBI:7896"/>
        <dbReference type="ChEBI" id="CHEBI:15377"/>
        <dbReference type="ChEBI" id="CHEBI:15378"/>
        <dbReference type="ChEBI" id="CHEBI:16870"/>
        <dbReference type="ChEBI" id="CHEBI:72998"/>
    </reaction>
    <physiologicalReaction direction="left-to-right" evidence="2">
        <dbReference type="Rhea" id="RHEA:40436"/>
    </physiologicalReaction>
</comment>
<comment type="catalytic activity">
    <reaction evidence="2">
        <text>2-(prostaglandin E2)-sn-glycero-3-phosphoethanolamine + H2O = sn-glycero-3-phosphoethanolamine + prostaglandin E2 + H(+)</text>
        <dbReference type="Rhea" id="RHEA:53704"/>
        <dbReference type="ChEBI" id="CHEBI:15377"/>
        <dbReference type="ChEBI" id="CHEBI:15378"/>
        <dbReference type="ChEBI" id="CHEBI:137581"/>
        <dbReference type="ChEBI" id="CHEBI:143890"/>
        <dbReference type="ChEBI" id="CHEBI:606564"/>
    </reaction>
    <physiologicalReaction direction="left-to-right" evidence="2">
        <dbReference type="Rhea" id="RHEA:53705"/>
    </physiologicalReaction>
</comment>
<comment type="catalytic activity">
    <reaction evidence="2">
        <text>2-[(15S)-hydroxy-(5Z,8Z,11Z,13E)-eicosatetraenoyl]-sn-glycero-3-phosphocholine + H2O = (15S)-hydroxy-(5Z,8Z,11Z,13E)-eicosatetraenoate + sn-glycerol 3-phosphocholine + H(+)</text>
        <dbReference type="Rhea" id="RHEA:53700"/>
        <dbReference type="ChEBI" id="CHEBI:15377"/>
        <dbReference type="ChEBI" id="CHEBI:15378"/>
        <dbReference type="ChEBI" id="CHEBI:16870"/>
        <dbReference type="ChEBI" id="CHEBI:57409"/>
        <dbReference type="ChEBI" id="CHEBI:137584"/>
    </reaction>
    <physiologicalReaction direction="left-to-right" evidence="2">
        <dbReference type="Rhea" id="RHEA:53701"/>
    </physiologicalReaction>
</comment>
<comment type="catalytic activity">
    <reaction evidence="2">
        <text>2-[(15R)-hydroxy-(5Z,8Z,11Z,13E)-eicosatetraenoyl]-sn-glycero-3-phosphocholine + H2O = (15R)-hydroxy-(5Z,8Z,11Z,13E)-eicosatetraenoate + sn-glycerol 3-phosphocholine + H(+)</text>
        <dbReference type="Rhea" id="RHEA:53696"/>
        <dbReference type="ChEBI" id="CHEBI:15377"/>
        <dbReference type="ChEBI" id="CHEBI:15378"/>
        <dbReference type="ChEBI" id="CHEBI:16870"/>
        <dbReference type="ChEBI" id="CHEBI:78837"/>
        <dbReference type="ChEBI" id="CHEBI:137583"/>
    </reaction>
    <physiologicalReaction direction="left-to-right" evidence="2">
        <dbReference type="Rhea" id="RHEA:53697"/>
    </physiologicalReaction>
</comment>
<comment type="catalytic activity">
    <reaction evidence="2">
        <text>2-(prostaglandin E2)-sn-glycero-3-phosphocholine + H2O = prostaglandin E2 + sn-glycerol 3-phosphocholine + H(+)</text>
        <dbReference type="Rhea" id="RHEA:53692"/>
        <dbReference type="ChEBI" id="CHEBI:15377"/>
        <dbReference type="ChEBI" id="CHEBI:15378"/>
        <dbReference type="ChEBI" id="CHEBI:16870"/>
        <dbReference type="ChEBI" id="CHEBI:137585"/>
        <dbReference type="ChEBI" id="CHEBI:606564"/>
    </reaction>
    <physiologicalReaction direction="left-to-right" evidence="2">
        <dbReference type="Rhea" id="RHEA:53693"/>
    </physiologicalReaction>
</comment>
<comment type="catalytic activity">
    <reaction evidence="2">
        <text>2-[(11R)-hydroxy-(5Z,8Z,12E,14Z)-eicosatetraenoyl]-sn-glycero-3-phosphocholine + H2O = (11R)-hydroxy-(5Z,8Z,12E,14Z)-eicosatetraenoate + sn-glycerol 3-phosphocholine + H(+)</text>
        <dbReference type="Rhea" id="RHEA:53688"/>
        <dbReference type="ChEBI" id="CHEBI:15377"/>
        <dbReference type="ChEBI" id="CHEBI:15378"/>
        <dbReference type="ChEBI" id="CHEBI:16870"/>
        <dbReference type="ChEBI" id="CHEBI:78836"/>
        <dbReference type="ChEBI" id="CHEBI:137582"/>
    </reaction>
    <physiologicalReaction direction="left-to-right" evidence="2">
        <dbReference type="Rhea" id="RHEA:53689"/>
    </physiologicalReaction>
</comment>
<comment type="catalytic activity">
    <reaction evidence="2">
        <text>1-(5Z,8Z,11Z,14Z-eicosatetraenoyl)-2-O-hexadecyl-sn-glycero-3-phosphocholine + H2O = 2-O-hexadecyl-sn-glycero-3-phosphocholine + (5Z,8Z,11Z,14Z)-eicosatetraenoate + H(+)</text>
        <dbReference type="Rhea" id="RHEA:41271"/>
        <dbReference type="ChEBI" id="CHEBI:15377"/>
        <dbReference type="ChEBI" id="CHEBI:15378"/>
        <dbReference type="ChEBI" id="CHEBI:32395"/>
        <dbReference type="ChEBI" id="CHEBI:77695"/>
        <dbReference type="ChEBI" id="CHEBI:77696"/>
    </reaction>
    <physiologicalReaction direction="left-to-right" evidence="2">
        <dbReference type="Rhea" id="RHEA:41272"/>
    </physiologicalReaction>
</comment>
<comment type="catalytic activity">
    <reaction evidence="2">
        <text>1-octadecanoyl-2-(5Z,8Z,11Z,14Z-eicosatetraenoyl)-sn-glycero-3-phosphocholine + glycerol = 1-(5Z,8Z,11Z,14Z-eicosatetraenoyl)-glycerol + 1-octadecanoyl-sn-glycero-3-phosphocholine</text>
        <dbReference type="Rhea" id="RHEA:41099"/>
        <dbReference type="ChEBI" id="CHEBI:17754"/>
        <dbReference type="ChEBI" id="CHEBI:73858"/>
        <dbReference type="ChEBI" id="CHEBI:74965"/>
        <dbReference type="ChEBI" id="CHEBI:75612"/>
    </reaction>
    <physiologicalReaction direction="left-to-right" evidence="2">
        <dbReference type="Rhea" id="RHEA:41100"/>
    </physiologicalReaction>
</comment>
<comment type="catalytic activity">
    <reaction evidence="2">
        <text>1-octadecanoyl-2-(9Z,12Z,15Z-octadecatrienoyl)-sn-glycero-3-phosphocholine + glycerol = 1-(9Z,12Z,15Z-octadecatrienoyl)-glycerol + 1-octadecanoyl-sn-glycero-3-phosphocholine</text>
        <dbReference type="Rhea" id="RHEA:41087"/>
        <dbReference type="ChEBI" id="CHEBI:17754"/>
        <dbReference type="ChEBI" id="CHEBI:73858"/>
        <dbReference type="ChEBI" id="CHEBI:75610"/>
        <dbReference type="ChEBI" id="CHEBI:78022"/>
    </reaction>
    <physiologicalReaction direction="left-to-right" evidence="2">
        <dbReference type="Rhea" id="RHEA:41088"/>
    </physiologicalReaction>
</comment>
<comment type="activity regulation">
    <text evidence="2 3">Activated by cytosolic calcium, which is necessary for binding to membrane lipids. Activated by phosphorylation in response to mitogenic stimuli.</text>
</comment>
<comment type="pathway">
    <text evidence="3">Membrane lipid metabolism; glycerophospholipid metabolism.</text>
</comment>
<comment type="pathway">
    <text evidence="2">Lipid metabolism; arachidonate metabolism.</text>
</comment>
<comment type="pathway">
    <text evidence="2">Lipid metabolism; prostaglandin biosynthesis.</text>
</comment>
<comment type="pathway">
    <text evidence="2">Lipid metabolism; leukotriene B4 biosynthesis.</text>
</comment>
<comment type="subunit">
    <text evidence="2">Interacts with KAT5.</text>
</comment>
<comment type="subcellular location">
    <subcellularLocation>
        <location evidence="2">Cytoplasm</location>
    </subcellularLocation>
    <subcellularLocation>
        <location evidence="2">Golgi apparatus membrane</location>
    </subcellularLocation>
    <subcellularLocation>
        <location evidence="2">Nucleus envelope</location>
    </subcellularLocation>
    <text evidence="2">Translocates to intracellular membranes in a calcium-dependent way.</text>
</comment>
<comment type="domain">
    <text evidence="2">The N-terminal C2 domain associates with lipid membranes upon calcium binding. It modulates enzyme activity by presenting the active site to its substrate in response to elevations of cytosolic calcium. In the presence of phosphoinositides, regulates phospholipase A2 and lysophospholipase activities in a calcium-independent way.</text>
</comment>
<comment type="PTM">
    <text evidence="2">Phosphorylated at both Ser-505 and Ser-727 in response to mitogenic stimuli.</text>
</comment>
<name>PA24A_PONAB</name>
<accession>Q5R8A5</accession>
<protein>
    <recommendedName>
        <fullName>Cytosolic phospholipase A2</fullName>
        <shortName>cPLA2</shortName>
    </recommendedName>
    <alternativeName>
        <fullName>Phospholipase A2 group IVA</fullName>
    </alternativeName>
    <domain>
        <recommendedName>
            <fullName>Phospholipase A2</fullName>
            <ecNumber evidence="2">3.1.1.4</ecNumber>
        </recommendedName>
        <alternativeName>
            <fullName>Phosphatidylcholine 2-acylhydrolase</fullName>
        </alternativeName>
    </domain>
    <domain>
        <recommendedName>
            <fullName>Lysophospholipase</fullName>
            <ecNumber evidence="2">3.1.1.5</ecNumber>
        </recommendedName>
    </domain>
</protein>
<proteinExistence type="evidence at transcript level"/>
<dbReference type="EC" id="3.1.1.4" evidence="2"/>
<dbReference type="EC" id="3.1.1.5" evidence="2"/>
<dbReference type="EMBL" id="CR859848">
    <property type="protein sequence ID" value="CAH92005.1"/>
    <property type="molecule type" value="mRNA"/>
</dbReference>
<dbReference type="RefSeq" id="NP_001126164.1">
    <property type="nucleotide sequence ID" value="NM_001132692.1"/>
</dbReference>
<dbReference type="BMRB" id="Q5R8A5"/>
<dbReference type="SMR" id="Q5R8A5"/>
<dbReference type="FunCoup" id="Q5R8A5">
    <property type="interactions" value="1293"/>
</dbReference>
<dbReference type="STRING" id="9601.ENSPPYP00000000461"/>
<dbReference type="GeneID" id="100173125"/>
<dbReference type="KEGG" id="pon:100173125"/>
<dbReference type="CTD" id="5321"/>
<dbReference type="eggNOG" id="KOG1012">
    <property type="taxonomic scope" value="Eukaryota"/>
</dbReference>
<dbReference type="eggNOG" id="KOG1325">
    <property type="taxonomic scope" value="Eukaryota"/>
</dbReference>
<dbReference type="InParanoid" id="Q5R8A5"/>
<dbReference type="OrthoDB" id="419768at2759"/>
<dbReference type="UniPathway" id="UPA00383"/>
<dbReference type="UniPathway" id="UPA00662"/>
<dbReference type="UniPathway" id="UPA00878"/>
<dbReference type="UniPathway" id="UPA00940"/>
<dbReference type="Proteomes" id="UP000001595">
    <property type="component" value="Unplaced"/>
</dbReference>
<dbReference type="GO" id="GO:0005737">
    <property type="term" value="C:cytoplasm"/>
    <property type="evidence" value="ECO:0000250"/>
    <property type="project" value="UniProtKB"/>
</dbReference>
<dbReference type="GO" id="GO:0005829">
    <property type="term" value="C:cytosol"/>
    <property type="evidence" value="ECO:0007669"/>
    <property type="project" value="TreeGrafter"/>
</dbReference>
<dbReference type="GO" id="GO:0005783">
    <property type="term" value="C:endoplasmic reticulum"/>
    <property type="evidence" value="ECO:0007669"/>
    <property type="project" value="TreeGrafter"/>
</dbReference>
<dbReference type="GO" id="GO:0000139">
    <property type="term" value="C:Golgi membrane"/>
    <property type="evidence" value="ECO:0000250"/>
    <property type="project" value="UniProtKB"/>
</dbReference>
<dbReference type="GO" id="GO:0005635">
    <property type="term" value="C:nuclear envelope"/>
    <property type="evidence" value="ECO:0000250"/>
    <property type="project" value="UniProtKB"/>
</dbReference>
<dbReference type="GO" id="GO:0005509">
    <property type="term" value="F:calcium ion binding"/>
    <property type="evidence" value="ECO:0000250"/>
    <property type="project" value="UniProtKB"/>
</dbReference>
<dbReference type="GO" id="GO:0047498">
    <property type="term" value="F:calcium-dependent phospholipase A2 activity"/>
    <property type="evidence" value="ECO:0000250"/>
    <property type="project" value="UniProtKB"/>
</dbReference>
<dbReference type="GO" id="GO:0005544">
    <property type="term" value="F:calcium-dependent phospholipid binding"/>
    <property type="evidence" value="ECO:0000250"/>
    <property type="project" value="UniProtKB"/>
</dbReference>
<dbReference type="GO" id="GO:0047499">
    <property type="term" value="F:calcium-independent phospholipase A2 activity"/>
    <property type="evidence" value="ECO:0000250"/>
    <property type="project" value="UniProtKB"/>
</dbReference>
<dbReference type="GO" id="GO:1902387">
    <property type="term" value="F:ceramide 1-phosphate binding"/>
    <property type="evidence" value="ECO:0000250"/>
    <property type="project" value="UniProtKB"/>
</dbReference>
<dbReference type="GO" id="GO:0004622">
    <property type="term" value="F:lysophospholipase activity"/>
    <property type="evidence" value="ECO:0000250"/>
    <property type="project" value="UniProtKB"/>
</dbReference>
<dbReference type="GO" id="GO:0008374">
    <property type="term" value="F:O-acyltransferase activity"/>
    <property type="evidence" value="ECO:0000250"/>
    <property type="project" value="UniProtKB"/>
</dbReference>
<dbReference type="GO" id="GO:0032266">
    <property type="term" value="F:phosphatidylinositol-3-phosphate binding"/>
    <property type="evidence" value="ECO:0000250"/>
    <property type="project" value="UniProtKB"/>
</dbReference>
<dbReference type="GO" id="GO:0070273">
    <property type="term" value="F:phosphatidylinositol-4-phosphate binding"/>
    <property type="evidence" value="ECO:0000250"/>
    <property type="project" value="UniProtKB"/>
</dbReference>
<dbReference type="GO" id="GO:0010314">
    <property type="term" value="F:phosphatidylinositol-5-phosphate binding"/>
    <property type="evidence" value="ECO:0000250"/>
    <property type="project" value="UniProtKB"/>
</dbReference>
<dbReference type="GO" id="GO:0019369">
    <property type="term" value="P:arachidonate metabolic process"/>
    <property type="evidence" value="ECO:0000250"/>
    <property type="project" value="UniProtKB"/>
</dbReference>
<dbReference type="GO" id="GO:0006071">
    <property type="term" value="P:glycerol metabolic process"/>
    <property type="evidence" value="ECO:0007669"/>
    <property type="project" value="UniProtKB-KW"/>
</dbReference>
<dbReference type="GO" id="GO:0019370">
    <property type="term" value="P:leukotriene biosynthetic process"/>
    <property type="evidence" value="ECO:0007669"/>
    <property type="project" value="UniProtKB-KW"/>
</dbReference>
<dbReference type="GO" id="GO:0006640">
    <property type="term" value="P:monoacylglycerol biosynthetic process"/>
    <property type="evidence" value="ECO:0000250"/>
    <property type="project" value="UniProtKB"/>
</dbReference>
<dbReference type="GO" id="GO:0034638">
    <property type="term" value="P:phosphatidylcholine catabolic process"/>
    <property type="evidence" value="ECO:0000250"/>
    <property type="project" value="UniProtKB"/>
</dbReference>
<dbReference type="GO" id="GO:0034478">
    <property type="term" value="P:phosphatidylglycerol catabolic process"/>
    <property type="evidence" value="ECO:0000250"/>
    <property type="project" value="UniProtKB"/>
</dbReference>
<dbReference type="GO" id="GO:0001516">
    <property type="term" value="P:prostaglandin biosynthetic process"/>
    <property type="evidence" value="ECO:0000250"/>
    <property type="project" value="UniProtKB"/>
</dbReference>
<dbReference type="CDD" id="cd04036">
    <property type="entry name" value="C2_cPLA2"/>
    <property type="match status" value="1"/>
</dbReference>
<dbReference type="CDD" id="cd07200">
    <property type="entry name" value="cPLA2_Grp-IVA"/>
    <property type="match status" value="1"/>
</dbReference>
<dbReference type="FunFam" id="2.60.40.150:FF:000030">
    <property type="entry name" value="Phospholipase A2"/>
    <property type="match status" value="1"/>
</dbReference>
<dbReference type="Gene3D" id="2.60.40.150">
    <property type="entry name" value="C2 domain"/>
    <property type="match status" value="1"/>
</dbReference>
<dbReference type="Gene3D" id="3.40.1090.10">
    <property type="entry name" value="Cytosolic phospholipase A2 catalytic domain"/>
    <property type="match status" value="1"/>
</dbReference>
<dbReference type="InterPro" id="IPR016035">
    <property type="entry name" value="Acyl_Trfase/lysoPLipase"/>
</dbReference>
<dbReference type="InterPro" id="IPR041847">
    <property type="entry name" value="C2_cPLA2"/>
</dbReference>
<dbReference type="InterPro" id="IPR000008">
    <property type="entry name" value="C2_dom"/>
</dbReference>
<dbReference type="InterPro" id="IPR035892">
    <property type="entry name" value="C2_domain_sf"/>
</dbReference>
<dbReference type="InterPro" id="IPR002642">
    <property type="entry name" value="LysoPLipase_cat_dom"/>
</dbReference>
<dbReference type="PANTHER" id="PTHR10728">
    <property type="entry name" value="CYTOSOLIC PHOSPHOLIPASE A2"/>
    <property type="match status" value="1"/>
</dbReference>
<dbReference type="PANTHER" id="PTHR10728:SF13">
    <property type="entry name" value="CYTOSOLIC PHOSPHOLIPASE A2"/>
    <property type="match status" value="1"/>
</dbReference>
<dbReference type="Pfam" id="PF00168">
    <property type="entry name" value="C2"/>
    <property type="match status" value="1"/>
</dbReference>
<dbReference type="Pfam" id="PF01735">
    <property type="entry name" value="PLA2_B"/>
    <property type="match status" value="1"/>
</dbReference>
<dbReference type="SMART" id="SM00239">
    <property type="entry name" value="C2"/>
    <property type="match status" value="1"/>
</dbReference>
<dbReference type="SMART" id="SM00022">
    <property type="entry name" value="PLAc"/>
    <property type="match status" value="1"/>
</dbReference>
<dbReference type="SUPFAM" id="SSF49562">
    <property type="entry name" value="C2 domain (Calcium/lipid-binding domain, CaLB)"/>
    <property type="match status" value="1"/>
</dbReference>
<dbReference type="SUPFAM" id="SSF52151">
    <property type="entry name" value="FabD/lysophospholipase-like"/>
    <property type="match status" value="1"/>
</dbReference>
<dbReference type="PROSITE" id="PS50004">
    <property type="entry name" value="C2"/>
    <property type="match status" value="1"/>
</dbReference>
<dbReference type="PROSITE" id="PS51210">
    <property type="entry name" value="PLA2C"/>
    <property type="match status" value="1"/>
</dbReference>
<organism>
    <name type="scientific">Pongo abelii</name>
    <name type="common">Sumatran orangutan</name>
    <name type="synonym">Pongo pygmaeus abelii</name>
    <dbReference type="NCBI Taxonomy" id="9601"/>
    <lineage>
        <taxon>Eukaryota</taxon>
        <taxon>Metazoa</taxon>
        <taxon>Chordata</taxon>
        <taxon>Craniata</taxon>
        <taxon>Vertebrata</taxon>
        <taxon>Euteleostomi</taxon>
        <taxon>Mammalia</taxon>
        <taxon>Eutheria</taxon>
        <taxon>Euarchontoglires</taxon>
        <taxon>Primates</taxon>
        <taxon>Haplorrhini</taxon>
        <taxon>Catarrhini</taxon>
        <taxon>Hominidae</taxon>
        <taxon>Pongo</taxon>
    </lineage>
</organism>
<keyword id="KW-0106">Calcium</keyword>
<keyword id="KW-0963">Cytoplasm</keyword>
<keyword id="KW-0275">Fatty acid biosynthesis</keyword>
<keyword id="KW-0276">Fatty acid metabolism</keyword>
<keyword id="KW-0319">Glycerol metabolism</keyword>
<keyword id="KW-0333">Golgi apparatus</keyword>
<keyword id="KW-0378">Hydrolase</keyword>
<keyword id="KW-1017">Isopeptide bond</keyword>
<keyword id="KW-0434">Leukotriene biosynthesis</keyword>
<keyword id="KW-0444">Lipid biosynthesis</keyword>
<keyword id="KW-0442">Lipid degradation</keyword>
<keyword id="KW-0443">Lipid metabolism</keyword>
<keyword id="KW-0446">Lipid-binding</keyword>
<keyword id="KW-0472">Membrane</keyword>
<keyword id="KW-0479">Metal-binding</keyword>
<keyword id="KW-0539">Nucleus</keyword>
<keyword id="KW-0595">Phospholipid degradation</keyword>
<keyword id="KW-1208">Phospholipid metabolism</keyword>
<keyword id="KW-0597">Phosphoprotein</keyword>
<keyword id="KW-0643">Prostaglandin biosynthesis</keyword>
<keyword id="KW-0644">Prostaglandin metabolism</keyword>
<keyword id="KW-1185">Reference proteome</keyword>
<keyword id="KW-0832">Ubl conjugation</keyword>
<sequence length="749" mass="85168">MSFIDPYQHIIVEHQYSHKFTVVVLCATKVTKGAFGDMLDTPDPYVELFISTTPDSRKRTRHFNNDINPVWNETFEFILDPNQENVLEITLMDANYVMDETLGTATFPVSSMKVGEKKEVPFIFNQVTEMILEMSLEVCSCPDLRFSMALCDQEKTFRQQRKEHIRESMKKLLGPKNSEGLHSARDVPVVAILGSGGGFRAMVGFSGVMKALYESGILDCATYVAGLSGSTWYMSTLYSHPDFPEKGPEEINEELMKNVSHNPLLLLTPQKVKRYVESLWKKKSSGQPVTFTDIFGMLIGETLIHNRMNTTLSSLKEKVNTAQCPLPLFTCLHVKPDVSELMFADWVEFSPYEIGMAKYGTFMAPDLFGSKFFMGTVVKKYEENPLHFLMGVWGSAFSILFNRVLGVSGSQSRGSTMEEELENITTKHIVSNDSSDSDDESHEPKGTENEDAGSDYQSDNQASWIHRMIMALVSDSALFNTREGRAGKVHNFMLGLNLNTSYPLSPLSDFATQDSFDDDELDAAVADPDEFERIYEPLDVKSKKIHVVDSGLTFNLPYPLILRPQRGVDLIISFDFSARPSDSSPPFKELLLAEKWAKMNKLPFPKIDPYVFDREGLKECYVFKPKNPDMEKDCPTIIHFVLANINFRKYKAPGVPRETEEEKEIADFDIFDDPESPFSTFNFQYPNQAFKRLHDLMHFNTLNNIDVIKEAMVESIEYRRQNPSRCSVSLSNVEARRFFNKEFLSKPKA</sequence>